<proteinExistence type="predicted"/>
<evidence type="ECO:0000255" key="1"/>
<evidence type="ECO:0000305" key="2"/>
<name>Y594_MYCPN</name>
<sequence>MNFSRRSLRVGAIVNVSVRSLLMRGKNRNKCNSIIFLTVGLLLFIAALALGVLVLFNGYQVNVNANGVDLKPFEIVHFPFAVKTFLSVLTFVLAAFGFVCMVASFLYFVSFKKLKPKANSAS</sequence>
<feature type="chain" id="PRO_0000210698" description="Uncharacterized protein MPN_594">
    <location>
        <begin position="1"/>
        <end position="122"/>
    </location>
</feature>
<feature type="transmembrane region" description="Helical" evidence="1">
    <location>
        <begin position="34"/>
        <end position="54"/>
    </location>
</feature>
<feature type="transmembrane region" description="Helical" evidence="1">
    <location>
        <begin position="91"/>
        <end position="111"/>
    </location>
</feature>
<reference key="1">
    <citation type="journal article" date="1996" name="Nucleic Acids Res.">
        <title>Complete sequence analysis of the genome of the bacterium Mycoplasma pneumoniae.</title>
        <authorList>
            <person name="Himmelreich R."/>
            <person name="Hilbert H."/>
            <person name="Plagens H."/>
            <person name="Pirkl E."/>
            <person name="Li B.-C."/>
            <person name="Herrmann R."/>
        </authorList>
    </citation>
    <scope>NUCLEOTIDE SEQUENCE [LARGE SCALE GENOMIC DNA]</scope>
    <source>
        <strain>ATCC 29342 / M129 / Subtype 1</strain>
    </source>
</reference>
<comment type="subcellular location">
    <subcellularLocation>
        <location evidence="2">Cell membrane</location>
        <topology evidence="2">Multi-pass membrane protein</topology>
    </subcellularLocation>
</comment>
<keyword id="KW-1003">Cell membrane</keyword>
<keyword id="KW-0472">Membrane</keyword>
<keyword id="KW-1185">Reference proteome</keyword>
<keyword id="KW-0812">Transmembrane</keyword>
<keyword id="KW-1133">Transmembrane helix</keyword>
<protein>
    <recommendedName>
        <fullName>Uncharacterized protein MPN_594</fullName>
    </recommendedName>
</protein>
<accession>P75191</accession>
<gene>
    <name type="ordered locus">MPN_594</name>
    <name type="ORF">D02_orf122A</name>
    <name type="ORF">MP248</name>
</gene>
<dbReference type="EMBL" id="U00089">
    <property type="protein sequence ID" value="AAB95896.1"/>
    <property type="molecule type" value="Genomic_DNA"/>
</dbReference>
<dbReference type="PIR" id="S73574">
    <property type="entry name" value="S73574"/>
</dbReference>
<dbReference type="RefSeq" id="NP_110283.1">
    <property type="nucleotide sequence ID" value="NC_000912.1"/>
</dbReference>
<dbReference type="RefSeq" id="WP_010874951.1">
    <property type="nucleotide sequence ID" value="NZ_OU342337.1"/>
</dbReference>
<dbReference type="SMR" id="P75191"/>
<dbReference type="STRING" id="272634.MPN_594"/>
<dbReference type="EnsemblBacteria" id="AAB95896">
    <property type="protein sequence ID" value="AAB95896"/>
    <property type="gene ID" value="MPN_594"/>
</dbReference>
<dbReference type="KEGG" id="mpn:MPN_594"/>
<dbReference type="PATRIC" id="fig|272634.6.peg.657"/>
<dbReference type="HOGENOM" id="CLU_2302786_0_0_14"/>
<dbReference type="BioCyc" id="MPNE272634:G1GJ3-968-MONOMER"/>
<dbReference type="Proteomes" id="UP000000808">
    <property type="component" value="Chromosome"/>
</dbReference>
<dbReference type="GO" id="GO:0005886">
    <property type="term" value="C:plasma membrane"/>
    <property type="evidence" value="ECO:0007669"/>
    <property type="project" value="UniProtKB-SubCell"/>
</dbReference>
<organism>
    <name type="scientific">Mycoplasma pneumoniae (strain ATCC 29342 / M129 / Subtype 1)</name>
    <name type="common">Mycoplasmoides pneumoniae</name>
    <dbReference type="NCBI Taxonomy" id="272634"/>
    <lineage>
        <taxon>Bacteria</taxon>
        <taxon>Bacillati</taxon>
        <taxon>Mycoplasmatota</taxon>
        <taxon>Mycoplasmoidales</taxon>
        <taxon>Mycoplasmoidaceae</taxon>
        <taxon>Mycoplasmoides</taxon>
    </lineage>
</organism>